<dbReference type="EC" id="3.1.21.7" evidence="1"/>
<dbReference type="EMBL" id="CP000720">
    <property type="protein sequence ID" value="ABS49813.1"/>
    <property type="molecule type" value="Genomic_DNA"/>
</dbReference>
<dbReference type="RefSeq" id="WP_011191556.1">
    <property type="nucleotide sequence ID" value="NC_009708.1"/>
</dbReference>
<dbReference type="SMR" id="A7FNH1"/>
<dbReference type="KEGG" id="ypi:YpsIP31758_3848"/>
<dbReference type="HOGENOM" id="CLU_047631_1_0_6"/>
<dbReference type="Proteomes" id="UP000002412">
    <property type="component" value="Chromosome"/>
</dbReference>
<dbReference type="GO" id="GO:0005737">
    <property type="term" value="C:cytoplasm"/>
    <property type="evidence" value="ECO:0007669"/>
    <property type="project" value="UniProtKB-SubCell"/>
</dbReference>
<dbReference type="GO" id="GO:0043737">
    <property type="term" value="F:deoxyribonuclease V activity"/>
    <property type="evidence" value="ECO:0007669"/>
    <property type="project" value="UniProtKB-UniRule"/>
</dbReference>
<dbReference type="GO" id="GO:0000287">
    <property type="term" value="F:magnesium ion binding"/>
    <property type="evidence" value="ECO:0007669"/>
    <property type="project" value="UniProtKB-UniRule"/>
</dbReference>
<dbReference type="GO" id="GO:0016891">
    <property type="term" value="F:RNA endonuclease activity, producing 5'-phosphomonoesters"/>
    <property type="evidence" value="ECO:0007669"/>
    <property type="project" value="TreeGrafter"/>
</dbReference>
<dbReference type="GO" id="GO:0003727">
    <property type="term" value="F:single-stranded RNA binding"/>
    <property type="evidence" value="ECO:0007669"/>
    <property type="project" value="TreeGrafter"/>
</dbReference>
<dbReference type="GO" id="GO:0006281">
    <property type="term" value="P:DNA repair"/>
    <property type="evidence" value="ECO:0007669"/>
    <property type="project" value="UniProtKB-UniRule"/>
</dbReference>
<dbReference type="CDD" id="cd06559">
    <property type="entry name" value="Endonuclease_V"/>
    <property type="match status" value="1"/>
</dbReference>
<dbReference type="FunFam" id="3.30.2170.10:FF:000001">
    <property type="entry name" value="Endonuclease V"/>
    <property type="match status" value="1"/>
</dbReference>
<dbReference type="Gene3D" id="3.30.2170.10">
    <property type="entry name" value="archaeoglobus fulgidus dsm 4304 superfamily"/>
    <property type="match status" value="1"/>
</dbReference>
<dbReference type="HAMAP" id="MF_00801">
    <property type="entry name" value="Endonuclease_5"/>
    <property type="match status" value="1"/>
</dbReference>
<dbReference type="InterPro" id="IPR007581">
    <property type="entry name" value="Endonuclease-V"/>
</dbReference>
<dbReference type="NCBIfam" id="NF008629">
    <property type="entry name" value="PRK11617.1"/>
    <property type="match status" value="1"/>
</dbReference>
<dbReference type="PANTHER" id="PTHR28511">
    <property type="entry name" value="ENDONUCLEASE V"/>
    <property type="match status" value="1"/>
</dbReference>
<dbReference type="PANTHER" id="PTHR28511:SF1">
    <property type="entry name" value="ENDONUCLEASE V"/>
    <property type="match status" value="1"/>
</dbReference>
<dbReference type="Pfam" id="PF04493">
    <property type="entry name" value="Endonuclease_5"/>
    <property type="match status" value="1"/>
</dbReference>
<protein>
    <recommendedName>
        <fullName evidence="1">Endonuclease V</fullName>
        <ecNumber evidence="1">3.1.21.7</ecNumber>
    </recommendedName>
    <alternativeName>
        <fullName evidence="1">Deoxyinosine 3'endonuclease</fullName>
    </alternativeName>
    <alternativeName>
        <fullName evidence="1">Deoxyribonuclease V</fullName>
        <shortName evidence="1">DNase V</shortName>
    </alternativeName>
</protein>
<reference key="1">
    <citation type="journal article" date="2007" name="PLoS Genet.">
        <title>The complete genome sequence of Yersinia pseudotuberculosis IP31758, the causative agent of Far East scarlet-like fever.</title>
        <authorList>
            <person name="Eppinger M."/>
            <person name="Rosovitz M.J."/>
            <person name="Fricke W.F."/>
            <person name="Rasko D.A."/>
            <person name="Kokorina G."/>
            <person name="Fayolle C."/>
            <person name="Lindler L.E."/>
            <person name="Carniel E."/>
            <person name="Ravel J."/>
        </authorList>
    </citation>
    <scope>NUCLEOTIDE SEQUENCE [LARGE SCALE GENOMIC DNA]</scope>
    <source>
        <strain>IP 31758</strain>
    </source>
</reference>
<sequence>MFDTKALQAEQRQRASEISLHDGIDNQFVRFIAGADVGFEQHGEITRAAIAILRYPSLALVEYQVARVATSLPYIPGLLSFREYPALLAAWAQLQQRPDLILVDGQGIAHPRRLGVASHFGLLVDVPTIGVAKSRLCGDFLPLHQDVGAVQPLFDNDEQLGWVWRSKIRCNPLFISPGHRVSVGSALAWVQRCMAGYRLPEPTRWADAIASNRPQFQRWLRKNPDFLGKRRDMI</sequence>
<accession>A7FNH1</accession>
<name>NFI_YERP3</name>
<evidence type="ECO:0000255" key="1">
    <source>
        <dbReference type="HAMAP-Rule" id="MF_00801"/>
    </source>
</evidence>
<organism>
    <name type="scientific">Yersinia pseudotuberculosis serotype O:1b (strain IP 31758)</name>
    <dbReference type="NCBI Taxonomy" id="349747"/>
    <lineage>
        <taxon>Bacteria</taxon>
        <taxon>Pseudomonadati</taxon>
        <taxon>Pseudomonadota</taxon>
        <taxon>Gammaproteobacteria</taxon>
        <taxon>Enterobacterales</taxon>
        <taxon>Yersiniaceae</taxon>
        <taxon>Yersinia</taxon>
    </lineage>
</organism>
<feature type="chain" id="PRO_1000062264" description="Endonuclease V">
    <location>
        <begin position="1"/>
        <end position="234"/>
    </location>
</feature>
<feature type="binding site" evidence="1">
    <location>
        <position position="36"/>
    </location>
    <ligand>
        <name>Mg(2+)</name>
        <dbReference type="ChEBI" id="CHEBI:18420"/>
    </ligand>
</feature>
<feature type="binding site" evidence="1">
    <location>
        <position position="104"/>
    </location>
    <ligand>
        <name>Mg(2+)</name>
        <dbReference type="ChEBI" id="CHEBI:18420"/>
    </ligand>
</feature>
<feature type="site" description="Interaction with target DNA" evidence="1">
    <location>
        <position position="74"/>
    </location>
</feature>
<proteinExistence type="inferred from homology"/>
<keyword id="KW-0963">Cytoplasm</keyword>
<keyword id="KW-0227">DNA damage</keyword>
<keyword id="KW-0234">DNA repair</keyword>
<keyword id="KW-0255">Endonuclease</keyword>
<keyword id="KW-0378">Hydrolase</keyword>
<keyword id="KW-0460">Magnesium</keyword>
<keyword id="KW-0479">Metal-binding</keyword>
<keyword id="KW-0540">Nuclease</keyword>
<gene>
    <name evidence="1" type="primary">nfi</name>
    <name type="ordered locus">YpsIP31758_3848</name>
</gene>
<comment type="function">
    <text evidence="1">DNA repair enzyme involved in the repair of deaminated bases. Selectively cleaves double-stranded DNA at the second phosphodiester bond 3' to a deoxyinosine leaving behind the intact lesion on the nicked DNA.</text>
</comment>
<comment type="catalytic activity">
    <reaction evidence="1">
        <text>Endonucleolytic cleavage at apurinic or apyrimidinic sites to products with a 5'-phosphate.</text>
        <dbReference type="EC" id="3.1.21.7"/>
    </reaction>
</comment>
<comment type="cofactor">
    <cofactor evidence="1">
        <name>Mg(2+)</name>
        <dbReference type="ChEBI" id="CHEBI:18420"/>
    </cofactor>
</comment>
<comment type="subcellular location">
    <subcellularLocation>
        <location evidence="1">Cytoplasm</location>
    </subcellularLocation>
</comment>
<comment type="similarity">
    <text evidence="1">Belongs to the endonuclease V family.</text>
</comment>